<accession>Q0ATH6</accession>
<organism>
    <name type="scientific">Maricaulis maris (strain MCS10)</name>
    <name type="common">Caulobacter maris</name>
    <dbReference type="NCBI Taxonomy" id="394221"/>
    <lineage>
        <taxon>Bacteria</taxon>
        <taxon>Pseudomonadati</taxon>
        <taxon>Pseudomonadota</taxon>
        <taxon>Alphaproteobacteria</taxon>
        <taxon>Maricaulales</taxon>
        <taxon>Maricaulaceae</taxon>
        <taxon>Maricaulis</taxon>
    </lineage>
</organism>
<dbReference type="EC" id="3.6.1.27" evidence="1"/>
<dbReference type="EMBL" id="CP000449">
    <property type="protein sequence ID" value="ABI64411.1"/>
    <property type="molecule type" value="Genomic_DNA"/>
</dbReference>
<dbReference type="RefSeq" id="WP_011642058.1">
    <property type="nucleotide sequence ID" value="NC_008347.1"/>
</dbReference>
<dbReference type="SMR" id="Q0ATH6"/>
<dbReference type="STRING" id="394221.Mmar10_0115"/>
<dbReference type="KEGG" id="mmr:Mmar10_0115"/>
<dbReference type="eggNOG" id="COG1968">
    <property type="taxonomic scope" value="Bacteria"/>
</dbReference>
<dbReference type="HOGENOM" id="CLU_060296_1_0_5"/>
<dbReference type="OrthoDB" id="9808289at2"/>
<dbReference type="Proteomes" id="UP000001964">
    <property type="component" value="Chromosome"/>
</dbReference>
<dbReference type="GO" id="GO:0005886">
    <property type="term" value="C:plasma membrane"/>
    <property type="evidence" value="ECO:0007669"/>
    <property type="project" value="UniProtKB-SubCell"/>
</dbReference>
<dbReference type="GO" id="GO:0050380">
    <property type="term" value="F:undecaprenyl-diphosphatase activity"/>
    <property type="evidence" value="ECO:0007669"/>
    <property type="project" value="UniProtKB-UniRule"/>
</dbReference>
<dbReference type="GO" id="GO:0071555">
    <property type="term" value="P:cell wall organization"/>
    <property type="evidence" value="ECO:0007669"/>
    <property type="project" value="UniProtKB-KW"/>
</dbReference>
<dbReference type="GO" id="GO:0009252">
    <property type="term" value="P:peptidoglycan biosynthetic process"/>
    <property type="evidence" value="ECO:0007669"/>
    <property type="project" value="UniProtKB-KW"/>
</dbReference>
<dbReference type="GO" id="GO:0008360">
    <property type="term" value="P:regulation of cell shape"/>
    <property type="evidence" value="ECO:0007669"/>
    <property type="project" value="UniProtKB-KW"/>
</dbReference>
<dbReference type="GO" id="GO:0046677">
    <property type="term" value="P:response to antibiotic"/>
    <property type="evidence" value="ECO:0007669"/>
    <property type="project" value="UniProtKB-UniRule"/>
</dbReference>
<dbReference type="HAMAP" id="MF_01006">
    <property type="entry name" value="Undec_diphosphatase"/>
    <property type="match status" value="1"/>
</dbReference>
<dbReference type="InterPro" id="IPR003824">
    <property type="entry name" value="UppP"/>
</dbReference>
<dbReference type="PANTHER" id="PTHR30622">
    <property type="entry name" value="UNDECAPRENYL-DIPHOSPHATASE"/>
    <property type="match status" value="1"/>
</dbReference>
<dbReference type="PANTHER" id="PTHR30622:SF4">
    <property type="entry name" value="UNDECAPRENYL-DIPHOSPHATASE"/>
    <property type="match status" value="1"/>
</dbReference>
<dbReference type="Pfam" id="PF02673">
    <property type="entry name" value="BacA"/>
    <property type="match status" value="1"/>
</dbReference>
<feature type="chain" id="PRO_0000290724" description="Undecaprenyl-diphosphatase">
    <location>
        <begin position="1"/>
        <end position="268"/>
    </location>
</feature>
<feature type="transmembrane region" description="Helical" evidence="1">
    <location>
        <begin position="1"/>
        <end position="21"/>
    </location>
</feature>
<feature type="transmembrane region" description="Helical" evidence="1">
    <location>
        <begin position="39"/>
        <end position="59"/>
    </location>
</feature>
<feature type="transmembrane region" description="Helical" evidence="1">
    <location>
        <begin position="85"/>
        <end position="105"/>
    </location>
</feature>
<feature type="transmembrane region" description="Helical" evidence="1">
    <location>
        <begin position="110"/>
        <end position="130"/>
    </location>
</feature>
<feature type="transmembrane region" description="Helical" evidence="1">
    <location>
        <begin position="144"/>
        <end position="164"/>
    </location>
</feature>
<feature type="transmembrane region" description="Helical" evidence="1">
    <location>
        <begin position="187"/>
        <end position="207"/>
    </location>
</feature>
<feature type="transmembrane region" description="Helical" evidence="1">
    <location>
        <begin position="221"/>
        <end position="241"/>
    </location>
</feature>
<feature type="transmembrane region" description="Helical" evidence="1">
    <location>
        <begin position="247"/>
        <end position="267"/>
    </location>
</feature>
<gene>
    <name evidence="1" type="primary">uppP</name>
    <name type="ordered locus">Mmar10_0115</name>
</gene>
<name>UPPP_MARMM</name>
<keyword id="KW-0046">Antibiotic resistance</keyword>
<keyword id="KW-0997">Cell inner membrane</keyword>
<keyword id="KW-1003">Cell membrane</keyword>
<keyword id="KW-0133">Cell shape</keyword>
<keyword id="KW-0961">Cell wall biogenesis/degradation</keyword>
<keyword id="KW-0378">Hydrolase</keyword>
<keyword id="KW-0472">Membrane</keyword>
<keyword id="KW-0573">Peptidoglycan synthesis</keyword>
<keyword id="KW-1185">Reference proteome</keyword>
<keyword id="KW-0812">Transmembrane</keyword>
<keyword id="KW-1133">Transmembrane helix</keyword>
<sequence length="268" mass="28004">MSLIYLVVLALVQGITEFLPISSSAHLILAPQVLGQADQGPLIDVMAHAGSLLAVLVYFRSDIVSVAMGKLALLQGRVTPGGRLALLVAASMPPIIIVAGALVAFDLVDALRSPRVIAIATLAFALPLWLADRYGRQTITIETMSFKHAALIGIAQLFALIPGASRSGVTMTAARGLGLTRTDSARFSMLMAIPVIAAFGLVSLIELVRADGMAAGASLSDGLIVAGLSFVTAWAAIAVLMRLVERIGFLPFALYRVGLGLALLVFFV</sequence>
<protein>
    <recommendedName>
        <fullName evidence="1">Undecaprenyl-diphosphatase</fullName>
        <ecNumber evidence="1">3.6.1.27</ecNumber>
    </recommendedName>
    <alternativeName>
        <fullName evidence="1">Bacitracin resistance protein</fullName>
    </alternativeName>
    <alternativeName>
        <fullName evidence="1">Undecaprenyl pyrophosphate phosphatase</fullName>
    </alternativeName>
</protein>
<comment type="function">
    <text evidence="1">Catalyzes the dephosphorylation of undecaprenyl diphosphate (UPP). Confers resistance to bacitracin.</text>
</comment>
<comment type="catalytic activity">
    <reaction evidence="1">
        <text>di-trans,octa-cis-undecaprenyl diphosphate + H2O = di-trans,octa-cis-undecaprenyl phosphate + phosphate + H(+)</text>
        <dbReference type="Rhea" id="RHEA:28094"/>
        <dbReference type="ChEBI" id="CHEBI:15377"/>
        <dbReference type="ChEBI" id="CHEBI:15378"/>
        <dbReference type="ChEBI" id="CHEBI:43474"/>
        <dbReference type="ChEBI" id="CHEBI:58405"/>
        <dbReference type="ChEBI" id="CHEBI:60392"/>
        <dbReference type="EC" id="3.6.1.27"/>
    </reaction>
</comment>
<comment type="subcellular location">
    <subcellularLocation>
        <location evidence="1">Cell inner membrane</location>
        <topology evidence="1">Multi-pass membrane protein</topology>
    </subcellularLocation>
</comment>
<comment type="miscellaneous">
    <text>Bacitracin is thought to be involved in the inhibition of peptidoglycan synthesis by sequestering undecaprenyl diphosphate, thereby reducing the pool of lipid carrier available.</text>
</comment>
<comment type="similarity">
    <text evidence="1">Belongs to the UppP family.</text>
</comment>
<proteinExistence type="inferred from homology"/>
<reference key="1">
    <citation type="submission" date="2006-08" db="EMBL/GenBank/DDBJ databases">
        <title>Complete sequence of Maricaulis maris MCS10.</title>
        <authorList>
            <consortium name="US DOE Joint Genome Institute"/>
            <person name="Copeland A."/>
            <person name="Lucas S."/>
            <person name="Lapidus A."/>
            <person name="Barry K."/>
            <person name="Detter J.C."/>
            <person name="Glavina del Rio T."/>
            <person name="Hammon N."/>
            <person name="Israni S."/>
            <person name="Dalin E."/>
            <person name="Tice H."/>
            <person name="Pitluck S."/>
            <person name="Saunders E."/>
            <person name="Brettin T."/>
            <person name="Bruce D."/>
            <person name="Han C."/>
            <person name="Tapia R."/>
            <person name="Gilna P."/>
            <person name="Schmutz J."/>
            <person name="Larimer F."/>
            <person name="Land M."/>
            <person name="Hauser L."/>
            <person name="Kyrpides N."/>
            <person name="Mikhailova N."/>
            <person name="Viollier P."/>
            <person name="Stephens C."/>
            <person name="Richardson P."/>
        </authorList>
    </citation>
    <scope>NUCLEOTIDE SEQUENCE [LARGE SCALE GENOMIC DNA]</scope>
    <source>
        <strain>MCS10</strain>
    </source>
</reference>
<evidence type="ECO:0000255" key="1">
    <source>
        <dbReference type="HAMAP-Rule" id="MF_01006"/>
    </source>
</evidence>